<evidence type="ECO:0000255" key="1">
    <source>
        <dbReference type="HAMAP-Rule" id="MF_00268"/>
    </source>
</evidence>
<accession>Q7M8Q1</accession>
<organism>
    <name type="scientific">Wolinella succinogenes (strain ATCC 29543 / DSM 1740 / CCUG 13145 / JCM 31913 / LMG 7466 / NCTC 11488 / FDC 602W)</name>
    <name type="common">Vibrio succinogenes</name>
    <dbReference type="NCBI Taxonomy" id="273121"/>
    <lineage>
        <taxon>Bacteria</taxon>
        <taxon>Pseudomonadati</taxon>
        <taxon>Campylobacterota</taxon>
        <taxon>Epsilonproteobacteria</taxon>
        <taxon>Campylobacterales</taxon>
        <taxon>Helicobacteraceae</taxon>
        <taxon>Wolinella</taxon>
    </lineage>
</organism>
<protein>
    <recommendedName>
        <fullName evidence="1">Protein RecA</fullName>
    </recommendedName>
    <alternativeName>
        <fullName evidence="1">Recombinase A</fullName>
    </alternativeName>
</protein>
<reference key="1">
    <citation type="journal article" date="2003" name="Proc. Natl. Acad. Sci. U.S.A.">
        <title>Complete genome sequence and analysis of Wolinella succinogenes.</title>
        <authorList>
            <person name="Baar C."/>
            <person name="Eppinger M."/>
            <person name="Raddatz G."/>
            <person name="Simon J."/>
            <person name="Lanz C."/>
            <person name="Klimmek O."/>
            <person name="Nandakumar R."/>
            <person name="Gross R."/>
            <person name="Rosinus A."/>
            <person name="Keller H."/>
            <person name="Jagtap P."/>
            <person name="Linke B."/>
            <person name="Meyer F."/>
            <person name="Lederer H."/>
            <person name="Schuster S.C."/>
        </authorList>
    </citation>
    <scope>NUCLEOTIDE SEQUENCE [LARGE SCALE GENOMIC DNA]</scope>
    <source>
        <strain>ATCC 29543 / DSM 1740 / CCUG 13145 / JCM 31913 / LMG 7466 / NCTC 11488 / FDC 602W</strain>
    </source>
</reference>
<sequence>MALDENKRKAIDLAIKQIDKAFGKGALVRLGEKPVEKIDSISTGSLGLDIALGIGGIPQGRIIEIYGPESSGKTTLALQVIAECQKKGGICAFIDAEHALDVSYAKRLGVDAENLLVSQPDYGEQALEILETLTRSGAVDLIVVDSVAALTPKSEIDGDMGDQHVGLQARLMSQALRKVTGVLHKMNTTVIFINQIRMKIGMMGYGSPETTTGGNALKFYASVRIDVRRIASLKQGEQHIGNRVKAKVVKNKVAPPFREAEFDIMFGEGISQEGELIDYGVKLDIVDKSGSWLSYGDKKLGQGKENAKAFLKENKEIANEIQAKIIGAIGSSDEITTFGDDEDESENLES</sequence>
<gene>
    <name evidence="1" type="primary">recA</name>
    <name type="ordered locus">WS1493</name>
</gene>
<comment type="function">
    <text evidence="1">Can catalyze the hydrolysis of ATP in the presence of single-stranded DNA, the ATP-dependent uptake of single-stranded DNA by duplex DNA, and the ATP-dependent hybridization of homologous single-stranded DNAs. It interacts with LexA causing its activation and leading to its autocatalytic cleavage.</text>
</comment>
<comment type="subcellular location">
    <subcellularLocation>
        <location evidence="1">Cytoplasm</location>
    </subcellularLocation>
</comment>
<comment type="similarity">
    <text evidence="1">Belongs to the RecA family.</text>
</comment>
<feature type="chain" id="PRO_0000122899" description="Protein RecA">
    <location>
        <begin position="1"/>
        <end position="350"/>
    </location>
</feature>
<feature type="binding site" evidence="1">
    <location>
        <begin position="67"/>
        <end position="74"/>
    </location>
    <ligand>
        <name>ATP</name>
        <dbReference type="ChEBI" id="CHEBI:30616"/>
    </ligand>
</feature>
<proteinExistence type="inferred from homology"/>
<name>RECA_WOLSU</name>
<keyword id="KW-0067">ATP-binding</keyword>
<keyword id="KW-0963">Cytoplasm</keyword>
<keyword id="KW-0227">DNA damage</keyword>
<keyword id="KW-0233">DNA recombination</keyword>
<keyword id="KW-0234">DNA repair</keyword>
<keyword id="KW-0238">DNA-binding</keyword>
<keyword id="KW-0547">Nucleotide-binding</keyword>
<keyword id="KW-1185">Reference proteome</keyword>
<keyword id="KW-0742">SOS response</keyword>
<dbReference type="EMBL" id="BX571661">
    <property type="protein sequence ID" value="CAE10545.1"/>
    <property type="molecule type" value="Genomic_DNA"/>
</dbReference>
<dbReference type="RefSeq" id="WP_011139329.1">
    <property type="nucleotide sequence ID" value="NC_005090.1"/>
</dbReference>
<dbReference type="SMR" id="Q7M8Q1"/>
<dbReference type="STRING" id="273121.WS1493"/>
<dbReference type="KEGG" id="wsu:WS1493"/>
<dbReference type="eggNOG" id="COG0468">
    <property type="taxonomic scope" value="Bacteria"/>
</dbReference>
<dbReference type="HOGENOM" id="CLU_040469_3_2_7"/>
<dbReference type="Proteomes" id="UP000000422">
    <property type="component" value="Chromosome"/>
</dbReference>
<dbReference type="GO" id="GO:0005829">
    <property type="term" value="C:cytosol"/>
    <property type="evidence" value="ECO:0007669"/>
    <property type="project" value="TreeGrafter"/>
</dbReference>
<dbReference type="GO" id="GO:0005524">
    <property type="term" value="F:ATP binding"/>
    <property type="evidence" value="ECO:0007669"/>
    <property type="project" value="UniProtKB-UniRule"/>
</dbReference>
<dbReference type="GO" id="GO:0016887">
    <property type="term" value="F:ATP hydrolysis activity"/>
    <property type="evidence" value="ECO:0007669"/>
    <property type="project" value="InterPro"/>
</dbReference>
<dbReference type="GO" id="GO:0140664">
    <property type="term" value="F:ATP-dependent DNA damage sensor activity"/>
    <property type="evidence" value="ECO:0007669"/>
    <property type="project" value="InterPro"/>
</dbReference>
<dbReference type="GO" id="GO:0003684">
    <property type="term" value="F:damaged DNA binding"/>
    <property type="evidence" value="ECO:0007669"/>
    <property type="project" value="UniProtKB-UniRule"/>
</dbReference>
<dbReference type="GO" id="GO:0003697">
    <property type="term" value="F:single-stranded DNA binding"/>
    <property type="evidence" value="ECO:0007669"/>
    <property type="project" value="UniProtKB-UniRule"/>
</dbReference>
<dbReference type="GO" id="GO:0006310">
    <property type="term" value="P:DNA recombination"/>
    <property type="evidence" value="ECO:0007669"/>
    <property type="project" value="UniProtKB-UniRule"/>
</dbReference>
<dbReference type="GO" id="GO:0006281">
    <property type="term" value="P:DNA repair"/>
    <property type="evidence" value="ECO:0007669"/>
    <property type="project" value="UniProtKB-UniRule"/>
</dbReference>
<dbReference type="GO" id="GO:0009432">
    <property type="term" value="P:SOS response"/>
    <property type="evidence" value="ECO:0007669"/>
    <property type="project" value="UniProtKB-UniRule"/>
</dbReference>
<dbReference type="CDD" id="cd00983">
    <property type="entry name" value="RecA"/>
    <property type="match status" value="1"/>
</dbReference>
<dbReference type="FunFam" id="3.40.50.300:FF:000087">
    <property type="entry name" value="Recombinase RecA"/>
    <property type="match status" value="1"/>
</dbReference>
<dbReference type="Gene3D" id="3.40.50.300">
    <property type="entry name" value="P-loop containing nucleotide triphosphate hydrolases"/>
    <property type="match status" value="1"/>
</dbReference>
<dbReference type="HAMAP" id="MF_00268">
    <property type="entry name" value="RecA"/>
    <property type="match status" value="1"/>
</dbReference>
<dbReference type="InterPro" id="IPR003593">
    <property type="entry name" value="AAA+_ATPase"/>
</dbReference>
<dbReference type="InterPro" id="IPR013765">
    <property type="entry name" value="DNA_recomb/repair_RecA"/>
</dbReference>
<dbReference type="InterPro" id="IPR020584">
    <property type="entry name" value="DNA_recomb/repair_RecA_CS"/>
</dbReference>
<dbReference type="InterPro" id="IPR027417">
    <property type="entry name" value="P-loop_NTPase"/>
</dbReference>
<dbReference type="InterPro" id="IPR049261">
    <property type="entry name" value="RecA-like_C"/>
</dbReference>
<dbReference type="InterPro" id="IPR049428">
    <property type="entry name" value="RecA-like_N"/>
</dbReference>
<dbReference type="InterPro" id="IPR020588">
    <property type="entry name" value="RecA_ATP-bd"/>
</dbReference>
<dbReference type="InterPro" id="IPR023400">
    <property type="entry name" value="RecA_C_sf"/>
</dbReference>
<dbReference type="InterPro" id="IPR020587">
    <property type="entry name" value="RecA_monomer-monomer_interface"/>
</dbReference>
<dbReference type="NCBIfam" id="TIGR02012">
    <property type="entry name" value="tigrfam_recA"/>
    <property type="match status" value="1"/>
</dbReference>
<dbReference type="PANTHER" id="PTHR45900:SF1">
    <property type="entry name" value="MITOCHONDRIAL DNA REPAIR PROTEIN RECA HOMOLOG-RELATED"/>
    <property type="match status" value="1"/>
</dbReference>
<dbReference type="PANTHER" id="PTHR45900">
    <property type="entry name" value="RECA"/>
    <property type="match status" value="1"/>
</dbReference>
<dbReference type="Pfam" id="PF00154">
    <property type="entry name" value="RecA"/>
    <property type="match status" value="1"/>
</dbReference>
<dbReference type="Pfam" id="PF21096">
    <property type="entry name" value="RecA_C"/>
    <property type="match status" value="1"/>
</dbReference>
<dbReference type="PRINTS" id="PR00142">
    <property type="entry name" value="RECA"/>
</dbReference>
<dbReference type="SMART" id="SM00382">
    <property type="entry name" value="AAA"/>
    <property type="match status" value="1"/>
</dbReference>
<dbReference type="SUPFAM" id="SSF52540">
    <property type="entry name" value="P-loop containing nucleoside triphosphate hydrolases"/>
    <property type="match status" value="1"/>
</dbReference>
<dbReference type="SUPFAM" id="SSF54752">
    <property type="entry name" value="RecA protein, C-terminal domain"/>
    <property type="match status" value="1"/>
</dbReference>
<dbReference type="PROSITE" id="PS00321">
    <property type="entry name" value="RECA_1"/>
    <property type="match status" value="1"/>
</dbReference>
<dbReference type="PROSITE" id="PS50162">
    <property type="entry name" value="RECA_2"/>
    <property type="match status" value="1"/>
</dbReference>
<dbReference type="PROSITE" id="PS50163">
    <property type="entry name" value="RECA_3"/>
    <property type="match status" value="1"/>
</dbReference>